<proteinExistence type="inferred from homology"/>
<protein>
    <recommendedName>
        <fullName evidence="1">Erythronate-4-phosphate dehydrogenase</fullName>
        <ecNumber evidence="1">1.1.1.290</ecNumber>
    </recommendedName>
</protein>
<sequence>MKILVDENMPYARELFSRLGDVQAVPGRPLPRDLLAGADALMVRSVTKVNADLLSGSAVKFVGSATAGTDHVDDTWLNANGIAFSAAPGCNAIAVVEYVFSSLLMLAERDGFQLRDKTVGIVGVGNVGRRLDARLKAWGVKTLLCDPPRADRGDAGDFLPLETLVRDADILTLHTPLYLDGPYRTHHLVDASVLDAFADGRILINACRGPVVDNAALLEALQRGKKLSVILDVWEPEPELSTDLLARVDIGTAHIAGYTLEGKARGTTQVFEAWSEFIGTPQQVALSSLLPEPEYAEVTLTVPLDEALLKRLVHLVYDVRRDDALLRHVAHQEGEFDRLRKHYQERREWSSLHVICADADSADCLNALGFTASVRGAR</sequence>
<reference key="1">
    <citation type="submission" date="2009-07" db="EMBL/GenBank/DDBJ databases">
        <title>Complete sequence of Pectobacterium carotovorum subsp. carotovorum PC1.</title>
        <authorList>
            <consortium name="US DOE Joint Genome Institute"/>
            <person name="Lucas S."/>
            <person name="Copeland A."/>
            <person name="Lapidus A."/>
            <person name="Glavina del Rio T."/>
            <person name="Tice H."/>
            <person name="Bruce D."/>
            <person name="Goodwin L."/>
            <person name="Pitluck S."/>
            <person name="Munk A.C."/>
            <person name="Brettin T."/>
            <person name="Detter J.C."/>
            <person name="Han C."/>
            <person name="Tapia R."/>
            <person name="Larimer F."/>
            <person name="Land M."/>
            <person name="Hauser L."/>
            <person name="Kyrpides N."/>
            <person name="Mikhailova N."/>
            <person name="Balakrishnan V."/>
            <person name="Glasner J."/>
            <person name="Perna N.T."/>
        </authorList>
    </citation>
    <scope>NUCLEOTIDE SEQUENCE [LARGE SCALE GENOMIC DNA]</scope>
    <source>
        <strain>PC1</strain>
    </source>
</reference>
<dbReference type="EC" id="1.1.1.290" evidence="1"/>
<dbReference type="EMBL" id="CP001657">
    <property type="protein sequence ID" value="ACT13832.1"/>
    <property type="molecule type" value="Genomic_DNA"/>
</dbReference>
<dbReference type="RefSeq" id="WP_015840994.1">
    <property type="nucleotide sequence ID" value="NC_012917.1"/>
</dbReference>
<dbReference type="SMR" id="C6DA76"/>
<dbReference type="STRING" id="561230.PC1_2802"/>
<dbReference type="GeneID" id="67793313"/>
<dbReference type="KEGG" id="pct:PC1_2802"/>
<dbReference type="eggNOG" id="COG0111">
    <property type="taxonomic scope" value="Bacteria"/>
</dbReference>
<dbReference type="HOGENOM" id="CLU_019796_4_0_6"/>
<dbReference type="OrthoDB" id="9770208at2"/>
<dbReference type="UniPathway" id="UPA00244">
    <property type="reaction ID" value="UER00310"/>
</dbReference>
<dbReference type="Proteomes" id="UP000002736">
    <property type="component" value="Chromosome"/>
</dbReference>
<dbReference type="GO" id="GO:0005829">
    <property type="term" value="C:cytosol"/>
    <property type="evidence" value="ECO:0007669"/>
    <property type="project" value="TreeGrafter"/>
</dbReference>
<dbReference type="GO" id="GO:0033711">
    <property type="term" value="F:4-phosphoerythronate dehydrogenase activity"/>
    <property type="evidence" value="ECO:0007669"/>
    <property type="project" value="UniProtKB-EC"/>
</dbReference>
<dbReference type="GO" id="GO:0051287">
    <property type="term" value="F:NAD binding"/>
    <property type="evidence" value="ECO:0007669"/>
    <property type="project" value="InterPro"/>
</dbReference>
<dbReference type="GO" id="GO:0046983">
    <property type="term" value="F:protein dimerization activity"/>
    <property type="evidence" value="ECO:0007669"/>
    <property type="project" value="InterPro"/>
</dbReference>
<dbReference type="GO" id="GO:0036001">
    <property type="term" value="P:'de novo' pyridoxal 5'-phosphate biosynthetic process"/>
    <property type="evidence" value="ECO:0007669"/>
    <property type="project" value="TreeGrafter"/>
</dbReference>
<dbReference type="GO" id="GO:0008615">
    <property type="term" value="P:pyridoxine biosynthetic process"/>
    <property type="evidence" value="ECO:0007669"/>
    <property type="project" value="UniProtKB-UniRule"/>
</dbReference>
<dbReference type="CDD" id="cd12158">
    <property type="entry name" value="ErythrP_dh"/>
    <property type="match status" value="1"/>
</dbReference>
<dbReference type="FunFam" id="3.40.50.720:FF:000093">
    <property type="entry name" value="Erythronate-4-phosphate dehydrogenase"/>
    <property type="match status" value="1"/>
</dbReference>
<dbReference type="Gene3D" id="3.30.1370.170">
    <property type="match status" value="1"/>
</dbReference>
<dbReference type="Gene3D" id="3.40.50.720">
    <property type="entry name" value="NAD(P)-binding Rossmann-like Domain"/>
    <property type="match status" value="2"/>
</dbReference>
<dbReference type="HAMAP" id="MF_01825">
    <property type="entry name" value="PdxB"/>
    <property type="match status" value="1"/>
</dbReference>
<dbReference type="InterPro" id="IPR006139">
    <property type="entry name" value="D-isomer_2_OHA_DH_cat_dom"/>
</dbReference>
<dbReference type="InterPro" id="IPR029753">
    <property type="entry name" value="D-isomer_DH_CS"/>
</dbReference>
<dbReference type="InterPro" id="IPR029752">
    <property type="entry name" value="D-isomer_DH_CS1"/>
</dbReference>
<dbReference type="InterPro" id="IPR006140">
    <property type="entry name" value="D-isomer_DH_NAD-bd"/>
</dbReference>
<dbReference type="InterPro" id="IPR020921">
    <property type="entry name" value="Erythronate-4-P_DHase"/>
</dbReference>
<dbReference type="InterPro" id="IPR024531">
    <property type="entry name" value="Erythronate-4-P_DHase_dimer"/>
</dbReference>
<dbReference type="InterPro" id="IPR036291">
    <property type="entry name" value="NAD(P)-bd_dom_sf"/>
</dbReference>
<dbReference type="InterPro" id="IPR038251">
    <property type="entry name" value="PdxB_dimer_sf"/>
</dbReference>
<dbReference type="NCBIfam" id="NF001309">
    <property type="entry name" value="PRK00257.1"/>
    <property type="match status" value="1"/>
</dbReference>
<dbReference type="PANTHER" id="PTHR42938">
    <property type="entry name" value="FORMATE DEHYDROGENASE 1"/>
    <property type="match status" value="1"/>
</dbReference>
<dbReference type="PANTHER" id="PTHR42938:SF9">
    <property type="entry name" value="FORMATE DEHYDROGENASE 1"/>
    <property type="match status" value="1"/>
</dbReference>
<dbReference type="Pfam" id="PF00389">
    <property type="entry name" value="2-Hacid_dh"/>
    <property type="match status" value="1"/>
</dbReference>
<dbReference type="Pfam" id="PF02826">
    <property type="entry name" value="2-Hacid_dh_C"/>
    <property type="match status" value="1"/>
</dbReference>
<dbReference type="Pfam" id="PF11890">
    <property type="entry name" value="DUF3410"/>
    <property type="match status" value="1"/>
</dbReference>
<dbReference type="SUPFAM" id="SSF52283">
    <property type="entry name" value="Formate/glycerate dehydrogenase catalytic domain-like"/>
    <property type="match status" value="1"/>
</dbReference>
<dbReference type="SUPFAM" id="SSF51735">
    <property type="entry name" value="NAD(P)-binding Rossmann-fold domains"/>
    <property type="match status" value="1"/>
</dbReference>
<dbReference type="PROSITE" id="PS00065">
    <property type="entry name" value="D_2_HYDROXYACID_DH_1"/>
    <property type="match status" value="1"/>
</dbReference>
<dbReference type="PROSITE" id="PS00671">
    <property type="entry name" value="D_2_HYDROXYACID_DH_3"/>
    <property type="match status" value="1"/>
</dbReference>
<feature type="chain" id="PRO_1000216071" description="Erythronate-4-phosphate dehydrogenase">
    <location>
        <begin position="1"/>
        <end position="378"/>
    </location>
</feature>
<feature type="active site" evidence="1">
    <location>
        <position position="208"/>
    </location>
</feature>
<feature type="active site" evidence="1">
    <location>
        <position position="237"/>
    </location>
</feature>
<feature type="active site" description="Proton donor" evidence="1">
    <location>
        <position position="254"/>
    </location>
</feature>
<feature type="binding site" evidence="1">
    <location>
        <position position="45"/>
    </location>
    <ligand>
        <name>substrate</name>
    </ligand>
</feature>
<feature type="binding site" evidence="1">
    <location>
        <position position="66"/>
    </location>
    <ligand>
        <name>substrate</name>
    </ligand>
</feature>
<feature type="binding site" evidence="1">
    <location>
        <position position="146"/>
    </location>
    <ligand>
        <name>NAD(+)</name>
        <dbReference type="ChEBI" id="CHEBI:57540"/>
    </ligand>
</feature>
<feature type="binding site" evidence="1">
    <location>
        <position position="175"/>
    </location>
    <ligand>
        <name>NAD(+)</name>
        <dbReference type="ChEBI" id="CHEBI:57540"/>
    </ligand>
</feature>
<feature type="binding site" evidence="1">
    <location>
        <position position="232"/>
    </location>
    <ligand>
        <name>NAD(+)</name>
        <dbReference type="ChEBI" id="CHEBI:57540"/>
    </ligand>
</feature>
<feature type="binding site" evidence="1">
    <location>
        <position position="257"/>
    </location>
    <ligand>
        <name>NAD(+)</name>
        <dbReference type="ChEBI" id="CHEBI:57540"/>
    </ligand>
</feature>
<feature type="binding site" evidence="1">
    <location>
        <position position="258"/>
    </location>
    <ligand>
        <name>substrate</name>
    </ligand>
</feature>
<accession>C6DA76</accession>
<name>PDXB_PECCP</name>
<gene>
    <name evidence="1" type="primary">pdxB</name>
    <name type="ordered locus">PC1_2802</name>
</gene>
<comment type="function">
    <text evidence="1">Catalyzes the oxidation of erythronate-4-phosphate to 3-hydroxy-2-oxo-4-phosphonooxybutanoate.</text>
</comment>
<comment type="catalytic activity">
    <reaction evidence="1">
        <text>4-phospho-D-erythronate + NAD(+) = (R)-3-hydroxy-2-oxo-4-phosphooxybutanoate + NADH + H(+)</text>
        <dbReference type="Rhea" id="RHEA:18829"/>
        <dbReference type="ChEBI" id="CHEBI:15378"/>
        <dbReference type="ChEBI" id="CHEBI:57540"/>
        <dbReference type="ChEBI" id="CHEBI:57945"/>
        <dbReference type="ChEBI" id="CHEBI:58538"/>
        <dbReference type="ChEBI" id="CHEBI:58766"/>
        <dbReference type="EC" id="1.1.1.290"/>
    </reaction>
</comment>
<comment type="pathway">
    <text evidence="1">Cofactor biosynthesis; pyridoxine 5'-phosphate biosynthesis; pyridoxine 5'-phosphate from D-erythrose 4-phosphate: step 2/5.</text>
</comment>
<comment type="subunit">
    <text evidence="1">Homodimer.</text>
</comment>
<comment type="subcellular location">
    <subcellularLocation>
        <location evidence="1">Cytoplasm</location>
    </subcellularLocation>
</comment>
<comment type="similarity">
    <text evidence="1">Belongs to the D-isomer specific 2-hydroxyacid dehydrogenase family. PdxB subfamily.</text>
</comment>
<evidence type="ECO:0000255" key="1">
    <source>
        <dbReference type="HAMAP-Rule" id="MF_01825"/>
    </source>
</evidence>
<keyword id="KW-0963">Cytoplasm</keyword>
<keyword id="KW-0520">NAD</keyword>
<keyword id="KW-0560">Oxidoreductase</keyword>
<keyword id="KW-0664">Pyridoxine biosynthesis</keyword>
<organism>
    <name type="scientific">Pectobacterium carotovorum subsp. carotovorum (strain PC1)</name>
    <dbReference type="NCBI Taxonomy" id="561230"/>
    <lineage>
        <taxon>Bacteria</taxon>
        <taxon>Pseudomonadati</taxon>
        <taxon>Pseudomonadota</taxon>
        <taxon>Gammaproteobacteria</taxon>
        <taxon>Enterobacterales</taxon>
        <taxon>Pectobacteriaceae</taxon>
        <taxon>Pectobacterium</taxon>
    </lineage>
</organism>